<sequence>MARRGLLISFFAIFSVLLQSSTSLISSSSVFVNPSKVKQVSSKPRAFVYEGFLTELECDHMVSLAKASLKRSAVADNDSGESKFSEVRTSSGTFISKGKDPIVSGIEDKISTWTFLPKENGEDIQVLRYEHGQKYDAHFDYFHDKVNIVRGGHRMATILMYLSNVTKGGETVFPDAEIPSRRVLSENKEDLSDCAKRGIAVKPRKGDALLFFNLHPDAIPDPLSLHGGCPVIEGEKWSATKWIHVDSFDRIVTPSGNCTDMNESCERWAVLGECTKNPEYMVGTTELPGYCRRSCKAC</sequence>
<feature type="chain" id="PRO_0000429338" description="Probable prolyl 4-hydroxylase 4">
    <location>
        <begin position="1"/>
        <end position="298"/>
    </location>
</feature>
<feature type="topological domain" description="Cytoplasmic" evidence="8">
    <location>
        <begin position="1"/>
        <end position="6"/>
    </location>
</feature>
<feature type="transmembrane region" description="Helical; Signal-anchor for type II membrane protein" evidence="3">
    <location>
        <begin position="7"/>
        <end position="25"/>
    </location>
</feature>
<feature type="topological domain" description="Lumenal" evidence="8">
    <location>
        <begin position="26"/>
        <end position="298"/>
    </location>
</feature>
<feature type="domain" description="Fe2OG dioxygenase" evidence="5">
    <location>
        <begin position="120"/>
        <end position="245"/>
    </location>
</feature>
<feature type="domain" description="ShKT" evidence="6">
    <location>
        <begin position="258"/>
        <end position="298"/>
    </location>
</feature>
<feature type="binding site" evidence="5">
    <location>
        <position position="138"/>
    </location>
    <ligand>
        <name>Fe cation</name>
        <dbReference type="ChEBI" id="CHEBI:24875"/>
    </ligand>
</feature>
<feature type="binding site" evidence="5">
    <location>
        <position position="140"/>
    </location>
    <ligand>
        <name>Fe cation</name>
        <dbReference type="ChEBI" id="CHEBI:24875"/>
    </ligand>
</feature>
<feature type="binding site" evidence="5">
    <location>
        <position position="226"/>
    </location>
    <ligand>
        <name>Fe cation</name>
        <dbReference type="ChEBI" id="CHEBI:24875"/>
    </ligand>
</feature>
<feature type="binding site" evidence="5">
    <location>
        <position position="236"/>
    </location>
    <ligand>
        <name>2-oxoglutarate</name>
        <dbReference type="ChEBI" id="CHEBI:16810"/>
    </ligand>
</feature>
<feature type="glycosylation site" description="N-linked (GlcNAc...) asparagine" evidence="4">
    <location>
        <position position="77"/>
    </location>
</feature>
<feature type="glycosylation site" description="N-linked (GlcNAc...) asparagine" evidence="4">
    <location>
        <position position="164"/>
    </location>
</feature>
<feature type="glycosylation site" description="N-linked (GlcNAc...) asparagine" evidence="4">
    <location>
        <position position="257"/>
    </location>
</feature>
<feature type="glycosylation site" description="N-linked (GlcNAc...) asparagine" evidence="4">
    <location>
        <position position="262"/>
    </location>
</feature>
<feature type="disulfide bond" evidence="6">
    <location>
        <begin position="258"/>
        <end position="298"/>
    </location>
</feature>
<feature type="disulfide bond" evidence="6">
    <location>
        <begin position="265"/>
        <end position="291"/>
    </location>
</feature>
<feature type="disulfide bond" evidence="6">
    <location>
        <begin position="274"/>
        <end position="295"/>
    </location>
</feature>
<feature type="sequence conflict" description="In Ref. 3; AAM13038/AAM91340." evidence="8" ref="3">
    <original>K</original>
    <variation>E</variation>
    <location>
        <position position="188"/>
    </location>
</feature>
<reference key="1">
    <citation type="journal article" date="2000" name="Nature">
        <title>Sequence and analysis of chromosome 5 of the plant Arabidopsis thaliana.</title>
        <authorList>
            <person name="Tabata S."/>
            <person name="Kaneko T."/>
            <person name="Nakamura Y."/>
            <person name="Kotani H."/>
            <person name="Kato T."/>
            <person name="Asamizu E."/>
            <person name="Miyajima N."/>
            <person name="Sasamoto S."/>
            <person name="Kimura T."/>
            <person name="Hosouchi T."/>
            <person name="Kawashima K."/>
            <person name="Kohara M."/>
            <person name="Matsumoto M."/>
            <person name="Matsuno A."/>
            <person name="Muraki A."/>
            <person name="Nakayama S."/>
            <person name="Nakazaki N."/>
            <person name="Naruo K."/>
            <person name="Okumura S."/>
            <person name="Shinpo S."/>
            <person name="Takeuchi C."/>
            <person name="Wada T."/>
            <person name="Watanabe A."/>
            <person name="Yamada M."/>
            <person name="Yasuda M."/>
            <person name="Sato S."/>
            <person name="de la Bastide M."/>
            <person name="Huang E."/>
            <person name="Spiegel L."/>
            <person name="Gnoj L."/>
            <person name="O'Shaughnessy A."/>
            <person name="Preston R."/>
            <person name="Habermann K."/>
            <person name="Murray J."/>
            <person name="Johnson D."/>
            <person name="Rohlfing T."/>
            <person name="Nelson J."/>
            <person name="Stoneking T."/>
            <person name="Pepin K."/>
            <person name="Spieth J."/>
            <person name="Sekhon M."/>
            <person name="Armstrong J."/>
            <person name="Becker M."/>
            <person name="Belter E."/>
            <person name="Cordum H."/>
            <person name="Cordes M."/>
            <person name="Courtney L."/>
            <person name="Courtney W."/>
            <person name="Dante M."/>
            <person name="Du H."/>
            <person name="Edwards J."/>
            <person name="Fryman J."/>
            <person name="Haakensen B."/>
            <person name="Lamar E."/>
            <person name="Latreille P."/>
            <person name="Leonard S."/>
            <person name="Meyer R."/>
            <person name="Mulvaney E."/>
            <person name="Ozersky P."/>
            <person name="Riley A."/>
            <person name="Strowmatt C."/>
            <person name="Wagner-McPherson C."/>
            <person name="Wollam A."/>
            <person name="Yoakum M."/>
            <person name="Bell M."/>
            <person name="Dedhia N."/>
            <person name="Parnell L."/>
            <person name="Shah R."/>
            <person name="Rodriguez M."/>
            <person name="Hoon See L."/>
            <person name="Vil D."/>
            <person name="Baker J."/>
            <person name="Kirchoff K."/>
            <person name="Toth K."/>
            <person name="King L."/>
            <person name="Bahret A."/>
            <person name="Miller B."/>
            <person name="Marra M.A."/>
            <person name="Martienssen R."/>
            <person name="McCombie W.R."/>
            <person name="Wilson R.K."/>
            <person name="Murphy G."/>
            <person name="Bancroft I."/>
            <person name="Volckaert G."/>
            <person name="Wambutt R."/>
            <person name="Duesterhoeft A."/>
            <person name="Stiekema W."/>
            <person name="Pohl T."/>
            <person name="Entian K.-D."/>
            <person name="Terryn N."/>
            <person name="Hartley N."/>
            <person name="Bent E."/>
            <person name="Johnson S."/>
            <person name="Langham S.-A."/>
            <person name="McCullagh B."/>
            <person name="Robben J."/>
            <person name="Grymonprez B."/>
            <person name="Zimmermann W."/>
            <person name="Ramsperger U."/>
            <person name="Wedler H."/>
            <person name="Balke K."/>
            <person name="Wedler E."/>
            <person name="Peters S."/>
            <person name="van Staveren M."/>
            <person name="Dirkse W."/>
            <person name="Mooijman P."/>
            <person name="Klein Lankhorst R."/>
            <person name="Weitzenegger T."/>
            <person name="Bothe G."/>
            <person name="Rose M."/>
            <person name="Hauf J."/>
            <person name="Berneiser S."/>
            <person name="Hempel S."/>
            <person name="Feldpausch M."/>
            <person name="Lamberth S."/>
            <person name="Villarroel R."/>
            <person name="Gielen J."/>
            <person name="Ardiles W."/>
            <person name="Bents O."/>
            <person name="Lemcke K."/>
            <person name="Kolesov G."/>
            <person name="Mayer K.F.X."/>
            <person name="Rudd S."/>
            <person name="Schoof H."/>
            <person name="Schueller C."/>
            <person name="Zaccaria P."/>
            <person name="Mewes H.-W."/>
            <person name="Bevan M."/>
            <person name="Fransz P.F."/>
        </authorList>
    </citation>
    <scope>NUCLEOTIDE SEQUENCE [LARGE SCALE GENOMIC DNA]</scope>
    <source>
        <strain>cv. Columbia</strain>
    </source>
</reference>
<reference key="2">
    <citation type="journal article" date="2017" name="Plant J.">
        <title>Araport11: a complete reannotation of the Arabidopsis thaliana reference genome.</title>
        <authorList>
            <person name="Cheng C.Y."/>
            <person name="Krishnakumar V."/>
            <person name="Chan A.P."/>
            <person name="Thibaud-Nissen F."/>
            <person name="Schobel S."/>
            <person name="Town C.D."/>
        </authorList>
    </citation>
    <scope>GENOME REANNOTATION</scope>
    <source>
        <strain>cv. Columbia</strain>
    </source>
</reference>
<reference key="3">
    <citation type="journal article" date="2003" name="Science">
        <title>Empirical analysis of transcriptional activity in the Arabidopsis genome.</title>
        <authorList>
            <person name="Yamada K."/>
            <person name="Lim J."/>
            <person name="Dale J.M."/>
            <person name="Chen H."/>
            <person name="Shinn P."/>
            <person name="Palm C.J."/>
            <person name="Southwick A.M."/>
            <person name="Wu H.C."/>
            <person name="Kim C.J."/>
            <person name="Nguyen M."/>
            <person name="Pham P.K."/>
            <person name="Cheuk R.F."/>
            <person name="Karlin-Newmann G."/>
            <person name="Liu S.X."/>
            <person name="Lam B."/>
            <person name="Sakano H."/>
            <person name="Wu T."/>
            <person name="Yu G."/>
            <person name="Miranda M."/>
            <person name="Quach H.L."/>
            <person name="Tripp M."/>
            <person name="Chang C.H."/>
            <person name="Lee J.M."/>
            <person name="Toriumi M.J."/>
            <person name="Chan M.M."/>
            <person name="Tang C.C."/>
            <person name="Onodera C.S."/>
            <person name="Deng J.M."/>
            <person name="Akiyama K."/>
            <person name="Ansari Y."/>
            <person name="Arakawa T."/>
            <person name="Banh J."/>
            <person name="Banno F."/>
            <person name="Bowser L."/>
            <person name="Brooks S.Y."/>
            <person name="Carninci P."/>
            <person name="Chao Q."/>
            <person name="Choy N."/>
            <person name="Enju A."/>
            <person name="Goldsmith A.D."/>
            <person name="Gurjal M."/>
            <person name="Hansen N.F."/>
            <person name="Hayashizaki Y."/>
            <person name="Johnson-Hopson C."/>
            <person name="Hsuan V.W."/>
            <person name="Iida K."/>
            <person name="Karnes M."/>
            <person name="Khan S."/>
            <person name="Koesema E."/>
            <person name="Ishida J."/>
            <person name="Jiang P.X."/>
            <person name="Jones T."/>
            <person name="Kawai J."/>
            <person name="Kamiya A."/>
            <person name="Meyers C."/>
            <person name="Nakajima M."/>
            <person name="Narusaka M."/>
            <person name="Seki M."/>
            <person name="Sakurai T."/>
            <person name="Satou M."/>
            <person name="Tamse R."/>
            <person name="Vaysberg M."/>
            <person name="Wallender E.K."/>
            <person name="Wong C."/>
            <person name="Yamamura Y."/>
            <person name="Yuan S."/>
            <person name="Shinozaki K."/>
            <person name="Davis R.W."/>
            <person name="Theologis A."/>
            <person name="Ecker J.R."/>
        </authorList>
    </citation>
    <scope>NUCLEOTIDE SEQUENCE [LARGE SCALE MRNA]</scope>
    <source>
        <strain>cv. Columbia</strain>
    </source>
</reference>
<reference key="4">
    <citation type="submission" date="2002-03" db="EMBL/GenBank/DDBJ databases">
        <title>Full-length cDNA from Arabidopsis thaliana.</title>
        <authorList>
            <person name="Brover V.V."/>
            <person name="Troukhan M.E."/>
            <person name="Alexandrov N.A."/>
            <person name="Lu Y.-P."/>
            <person name="Flavell R.B."/>
            <person name="Feldmann K.A."/>
        </authorList>
    </citation>
    <scope>NUCLEOTIDE SEQUENCE [LARGE SCALE MRNA]</scope>
</reference>
<reference key="5">
    <citation type="journal article" date="2007" name="Physiol. Plantarum">
        <title>Arabidopsis prolyl 4-hydroxylases are differentially expressed in response to hypoxia, anoxia and mechanical wounding.</title>
        <authorList>
            <person name="Vlad F."/>
            <person name="Spano T."/>
            <person name="Vlad D."/>
            <person name="Bou Daher F."/>
            <person name="Ouelhadj A."/>
            <person name="Kalaitzis P."/>
        </authorList>
    </citation>
    <scope>GENE FAMILY</scope>
    <scope>NOMENCLATURE</scope>
</reference>
<organism>
    <name type="scientific">Arabidopsis thaliana</name>
    <name type="common">Mouse-ear cress</name>
    <dbReference type="NCBI Taxonomy" id="3702"/>
    <lineage>
        <taxon>Eukaryota</taxon>
        <taxon>Viridiplantae</taxon>
        <taxon>Streptophyta</taxon>
        <taxon>Embryophyta</taxon>
        <taxon>Tracheophyta</taxon>
        <taxon>Spermatophyta</taxon>
        <taxon>Magnoliopsida</taxon>
        <taxon>eudicotyledons</taxon>
        <taxon>Gunneridae</taxon>
        <taxon>Pentapetalae</taxon>
        <taxon>rosids</taxon>
        <taxon>malvids</taxon>
        <taxon>Brassicales</taxon>
        <taxon>Brassicaceae</taxon>
        <taxon>Camelineae</taxon>
        <taxon>Arabidopsis</taxon>
    </lineage>
</organism>
<name>P4H4_ARATH</name>
<keyword id="KW-0223">Dioxygenase</keyword>
<keyword id="KW-1015">Disulfide bond</keyword>
<keyword id="KW-0256">Endoplasmic reticulum</keyword>
<keyword id="KW-0325">Glycoprotein</keyword>
<keyword id="KW-0408">Iron</keyword>
<keyword id="KW-0472">Membrane</keyword>
<keyword id="KW-0479">Metal-binding</keyword>
<keyword id="KW-0560">Oxidoreductase</keyword>
<keyword id="KW-1185">Reference proteome</keyword>
<keyword id="KW-0735">Signal-anchor</keyword>
<keyword id="KW-0812">Transmembrane</keyword>
<keyword id="KW-1133">Transmembrane helix</keyword>
<accession>Q8LAN3</accession>
<accession>Q8RWK0</accession>
<gene>
    <name evidence="7" type="primary">P4H4</name>
    <name type="ordered locus">At5g18900</name>
    <name type="ORF">F17K4.150</name>
</gene>
<protein>
    <recommendedName>
        <fullName evidence="8">Probable prolyl 4-hydroxylase 4</fullName>
        <shortName evidence="7">AtP4H4</shortName>
        <ecNumber evidence="8">1.14.11.2</ecNumber>
    </recommendedName>
</protein>
<dbReference type="EC" id="1.14.11.2" evidence="8"/>
<dbReference type="EMBL" id="AC068655">
    <property type="status" value="NOT_ANNOTATED_CDS"/>
    <property type="molecule type" value="Genomic_DNA"/>
</dbReference>
<dbReference type="EMBL" id="CP002688">
    <property type="protein sequence ID" value="AED92626.1"/>
    <property type="molecule type" value="Genomic_DNA"/>
</dbReference>
<dbReference type="EMBL" id="AY093039">
    <property type="protein sequence ID" value="AAM13038.1"/>
    <property type="molecule type" value="mRNA"/>
</dbReference>
<dbReference type="EMBL" id="AY128940">
    <property type="protein sequence ID" value="AAM91340.1"/>
    <property type="molecule type" value="mRNA"/>
</dbReference>
<dbReference type="EMBL" id="AY087708">
    <property type="protein sequence ID" value="AAM65245.1"/>
    <property type="molecule type" value="mRNA"/>
</dbReference>
<dbReference type="RefSeq" id="NP_197391.1">
    <property type="nucleotide sequence ID" value="NM_121895.4"/>
</dbReference>
<dbReference type="SMR" id="Q8LAN3"/>
<dbReference type="FunCoup" id="Q8LAN3">
    <property type="interactions" value="356"/>
</dbReference>
<dbReference type="STRING" id="3702.Q8LAN3"/>
<dbReference type="GlyCosmos" id="Q8LAN3">
    <property type="glycosylation" value="4 sites, No reported glycans"/>
</dbReference>
<dbReference type="GlyGen" id="Q8LAN3">
    <property type="glycosylation" value="4 sites"/>
</dbReference>
<dbReference type="iPTMnet" id="Q8LAN3"/>
<dbReference type="PaxDb" id="3702-AT5G18900.1"/>
<dbReference type="ProteomicsDB" id="248883"/>
<dbReference type="EnsemblPlants" id="AT5G18900.1">
    <property type="protein sequence ID" value="AT5G18900.1"/>
    <property type="gene ID" value="AT5G18900"/>
</dbReference>
<dbReference type="GeneID" id="832008"/>
<dbReference type="Gramene" id="AT5G18900.1">
    <property type="protein sequence ID" value="AT5G18900.1"/>
    <property type="gene ID" value="AT5G18900"/>
</dbReference>
<dbReference type="KEGG" id="ath:AT5G18900"/>
<dbReference type="Araport" id="AT5G18900"/>
<dbReference type="TAIR" id="AT5G18900"/>
<dbReference type="eggNOG" id="KOG1591">
    <property type="taxonomic scope" value="Eukaryota"/>
</dbReference>
<dbReference type="HOGENOM" id="CLU_058132_5_0_1"/>
<dbReference type="InParanoid" id="Q8LAN3"/>
<dbReference type="OMA" id="AVFFSYE"/>
<dbReference type="OrthoDB" id="420380at2759"/>
<dbReference type="PhylomeDB" id="Q8LAN3"/>
<dbReference type="BioCyc" id="ARA:AT5G18900-MONOMER"/>
<dbReference type="BRENDA" id="1.14.11.2">
    <property type="organism ID" value="399"/>
</dbReference>
<dbReference type="PRO" id="PR:Q8LAN3"/>
<dbReference type="Proteomes" id="UP000006548">
    <property type="component" value="Chromosome 5"/>
</dbReference>
<dbReference type="ExpressionAtlas" id="Q8LAN3">
    <property type="expression patterns" value="baseline and differential"/>
</dbReference>
<dbReference type="GO" id="GO:0005737">
    <property type="term" value="C:cytoplasm"/>
    <property type="evidence" value="ECO:0007005"/>
    <property type="project" value="TAIR"/>
</dbReference>
<dbReference type="GO" id="GO:0005783">
    <property type="term" value="C:endoplasmic reticulum"/>
    <property type="evidence" value="ECO:0007005"/>
    <property type="project" value="TAIR"/>
</dbReference>
<dbReference type="GO" id="GO:0005789">
    <property type="term" value="C:endoplasmic reticulum membrane"/>
    <property type="evidence" value="ECO:0007669"/>
    <property type="project" value="UniProtKB-SubCell"/>
</dbReference>
<dbReference type="GO" id="GO:0005794">
    <property type="term" value="C:Golgi apparatus"/>
    <property type="evidence" value="ECO:0007005"/>
    <property type="project" value="TAIR"/>
</dbReference>
<dbReference type="GO" id="GO:0000137">
    <property type="term" value="C:Golgi cis cisterna"/>
    <property type="evidence" value="ECO:0007005"/>
    <property type="project" value="TAIR"/>
</dbReference>
<dbReference type="GO" id="GO:0005634">
    <property type="term" value="C:nucleus"/>
    <property type="evidence" value="ECO:0007005"/>
    <property type="project" value="TAIR"/>
</dbReference>
<dbReference type="GO" id="GO:0009536">
    <property type="term" value="C:plastid"/>
    <property type="evidence" value="ECO:0007005"/>
    <property type="project" value="TAIR"/>
</dbReference>
<dbReference type="GO" id="GO:0005506">
    <property type="term" value="F:iron ion binding"/>
    <property type="evidence" value="ECO:0007669"/>
    <property type="project" value="InterPro"/>
</dbReference>
<dbReference type="GO" id="GO:0031418">
    <property type="term" value="F:L-ascorbic acid binding"/>
    <property type="evidence" value="ECO:0007669"/>
    <property type="project" value="InterPro"/>
</dbReference>
<dbReference type="GO" id="GO:0004656">
    <property type="term" value="F:procollagen-proline 4-dioxygenase activity"/>
    <property type="evidence" value="ECO:0007669"/>
    <property type="project" value="UniProtKB-EC"/>
</dbReference>
<dbReference type="FunFam" id="2.60.120.620:FF:000002">
    <property type="entry name" value="Prolyl 4-hydroxylase 4"/>
    <property type="match status" value="1"/>
</dbReference>
<dbReference type="Gene3D" id="2.60.120.620">
    <property type="entry name" value="q2cbj1_9rhob like domain"/>
    <property type="match status" value="1"/>
</dbReference>
<dbReference type="InterPro" id="IPR005123">
    <property type="entry name" value="Oxoglu/Fe-dep_dioxygenase_dom"/>
</dbReference>
<dbReference type="InterPro" id="IPR045054">
    <property type="entry name" value="P4HA-like"/>
</dbReference>
<dbReference type="InterPro" id="IPR006620">
    <property type="entry name" value="Pro_4_hyd_alph"/>
</dbReference>
<dbReference type="InterPro" id="IPR044862">
    <property type="entry name" value="Pro_4_hyd_alph_FE2OG_OXY"/>
</dbReference>
<dbReference type="InterPro" id="IPR003582">
    <property type="entry name" value="ShKT_dom"/>
</dbReference>
<dbReference type="PANTHER" id="PTHR10869:SF194">
    <property type="entry name" value="PROLYL 4-HYDROXYLASE 4-RELATED"/>
    <property type="match status" value="1"/>
</dbReference>
<dbReference type="PANTHER" id="PTHR10869">
    <property type="entry name" value="PROLYL 4-HYDROXYLASE ALPHA SUBUNIT"/>
    <property type="match status" value="1"/>
</dbReference>
<dbReference type="Pfam" id="PF13640">
    <property type="entry name" value="2OG-FeII_Oxy_3"/>
    <property type="match status" value="1"/>
</dbReference>
<dbReference type="Pfam" id="PF01549">
    <property type="entry name" value="ShK"/>
    <property type="match status" value="1"/>
</dbReference>
<dbReference type="SMART" id="SM00702">
    <property type="entry name" value="P4Hc"/>
    <property type="match status" value="1"/>
</dbReference>
<dbReference type="PROSITE" id="PS51471">
    <property type="entry name" value="FE2OG_OXY"/>
    <property type="match status" value="1"/>
</dbReference>
<dbReference type="PROSITE" id="PS51670">
    <property type="entry name" value="SHKT"/>
    <property type="match status" value="1"/>
</dbReference>
<proteinExistence type="evidence at transcript level"/>
<comment type="function">
    <text evidence="1">Catalyzes the post-translational formation of 4-hydroxyproline in -Xaa-Pro-Gly- sequences in proline-rich peptide sequences of plant glycoproteins and other proteins. Hydroxyprolines are important constituent of many plant cell wall glycoproteins such as extensins, hydroxyproline-rich glycoproteins, lectins and arabinogalactan proteins.</text>
</comment>
<comment type="catalytic activity">
    <reaction evidence="1">
        <text>L-prolyl-[collagen] + 2-oxoglutarate + O2 = trans-4-hydroxy-L-prolyl-[collagen] + succinate + CO2</text>
        <dbReference type="Rhea" id="RHEA:18945"/>
        <dbReference type="Rhea" id="RHEA-COMP:11676"/>
        <dbReference type="Rhea" id="RHEA-COMP:11680"/>
        <dbReference type="ChEBI" id="CHEBI:15379"/>
        <dbReference type="ChEBI" id="CHEBI:16526"/>
        <dbReference type="ChEBI" id="CHEBI:16810"/>
        <dbReference type="ChEBI" id="CHEBI:30031"/>
        <dbReference type="ChEBI" id="CHEBI:50342"/>
        <dbReference type="ChEBI" id="CHEBI:61965"/>
        <dbReference type="EC" id="1.14.11.2"/>
    </reaction>
</comment>
<comment type="cofactor">
    <cofactor evidence="5">
        <name>Fe(2+)</name>
        <dbReference type="ChEBI" id="CHEBI:29033"/>
    </cofactor>
    <text evidence="5">Binds 1 Fe(2+) ion per subunit.</text>
</comment>
<comment type="cofactor">
    <cofactor evidence="2">
        <name>L-ascorbate</name>
        <dbReference type="ChEBI" id="CHEBI:38290"/>
    </cofactor>
</comment>
<comment type="subcellular location">
    <subcellularLocation>
        <location evidence="1">Endoplasmic reticulum membrane</location>
        <topology evidence="1">Single-pass type II membrane protein</topology>
    </subcellularLocation>
</comment>
<comment type="similarity">
    <text evidence="8">Belongs to the P4HA family.</text>
</comment>
<evidence type="ECO:0000250" key="1">
    <source>
        <dbReference type="UniProtKB" id="F4JAU3"/>
    </source>
</evidence>
<evidence type="ECO:0000250" key="2">
    <source>
        <dbReference type="UniProtKB" id="Q86KR9"/>
    </source>
</evidence>
<evidence type="ECO:0000255" key="3"/>
<evidence type="ECO:0000255" key="4">
    <source>
        <dbReference type="PROSITE-ProRule" id="PRU00498"/>
    </source>
</evidence>
<evidence type="ECO:0000255" key="5">
    <source>
        <dbReference type="PROSITE-ProRule" id="PRU00805"/>
    </source>
</evidence>
<evidence type="ECO:0000255" key="6">
    <source>
        <dbReference type="PROSITE-ProRule" id="PRU01005"/>
    </source>
</evidence>
<evidence type="ECO:0000303" key="7">
    <source ref="5"/>
</evidence>
<evidence type="ECO:0000305" key="8"/>